<dbReference type="EMBL" id="JH725193">
    <property type="protein sequence ID" value="EJP62022.1"/>
    <property type="molecule type" value="Genomic_DNA"/>
</dbReference>
<dbReference type="RefSeq" id="XP_008602389.1">
    <property type="nucleotide sequence ID" value="XM_008604167.1"/>
</dbReference>
<dbReference type="GeneID" id="19892082"/>
<dbReference type="HOGENOM" id="CLU_168414_1_0_1"/>
<dbReference type="InParanoid" id="J4UGK4"/>
<dbReference type="OrthoDB" id="10937at474943"/>
<dbReference type="Proteomes" id="UP000002762">
    <property type="component" value="Unassembled WGS sequence"/>
</dbReference>
<proteinExistence type="evidence at transcript level"/>
<accession>J4UGK4</accession>
<protein>
    <recommendedName>
        <fullName evidence="5">Class I hydrophobin E</fullName>
    </recommendedName>
</protein>
<gene>
    <name evidence="5" type="primary">hyd1E</name>
    <name type="ORF">BBA_09070</name>
</gene>
<reference key="1">
    <citation type="journal article" date="2012" name="Sci. Rep.">
        <title>Genomic perspectives on the evolution of fungal entomopathogenicity in Beauveria bassiana.</title>
        <authorList>
            <person name="Xiao G."/>
            <person name="Ying S.-H."/>
            <person name="Zheng P."/>
            <person name="Wang Z.-L."/>
            <person name="Zhang S."/>
            <person name="Xie X.-Q."/>
            <person name="Shang Y."/>
            <person name="St Leger R.J."/>
            <person name="Zhao G.-P."/>
            <person name="Wang C."/>
            <person name="Feng M.-G."/>
        </authorList>
    </citation>
    <scope>NUCLEOTIDE SEQUENCE [LARGE SCALE GENOMIC DNA]</scope>
    <source>
        <strain>ARSEF 2860</strain>
    </source>
</reference>
<reference key="2">
    <citation type="journal article" date="2025" name="Microbiol. Res.">
        <title>Deciphering roles of nine hydrophobins (Hyd1A-F and Hyd2A-C) in the asexual and insect-pathogenic lifecycles of Beauveria bassiana.</title>
        <authorList>
            <person name="Feng J.R."/>
            <person name="Li M."/>
            <person name="Ying S.H."/>
            <person name="Feng M.G."/>
        </authorList>
    </citation>
    <scope>FUNCTION</scope>
    <scope>SUBCELLULAR LOCATION</scope>
    <scope>DISRUPTION PHENOTYPE</scope>
</reference>
<comment type="function">
    <text evidence="4 7">Aerial growth, conidiation, and dispersal of filamentous fungi in the environment rely upon a capability of their secreting small amphipathic proteins called hydrophobins (HPBs) with low sequence identity. Class I can self-assemble into an outermost layer of rodlet bundles on aerial cell surfaces, conferring cellular hydrophobicity that supports fungal growth, development and dispersal; whereas Class II form highly ordered films at water-air interfaces through intermolecular interactions but contribute nothing to the rodlet structure (Probable). Hyd1E contributes to certain cell wall-related features, such as hydrophobicity but is not involved in cell wall-related events during fungal proliferation in host hemocoel (PubMed:39724799). Does not contribute to conidial hydrophobicity (PubMed:39724799).</text>
</comment>
<comment type="subcellular location">
    <subcellularLocation>
        <location evidence="4">Secreted</location>
    </subcellularLocation>
    <subcellularLocation>
        <location evidence="4">Secreted</location>
        <location evidence="4">Cell wall</location>
    </subcellularLocation>
    <subcellularLocation>
        <location evidence="4">Vacuole</location>
    </subcellularLocation>
    <subcellularLocation>
        <location evidence="4">Cytoplasmic vesicle</location>
    </subcellularLocation>
    <text evidence="4">Accumulates exclusively on the cell walls of aerial hyphae and conidia and in the vacuoles and vesicles of hyphae and blastospores.</text>
</comment>
<comment type="induction">
    <text evidence="4">Under normal conditions on SDAY medium (Sabouraud dextrose agar plus 1% yeast extract), hyd1E is transcriptionally active during the first 4 or 5 days. Hyd1A is the most active at transcription level under normal culture conditions, followed by hyd1B, hyd1E, hyd2A and hyd2C in order.</text>
</comment>
<comment type="disruption phenotype">
    <text evidence="4">Does not affect radial growth and multiple stress responses.</text>
</comment>
<comment type="similarity">
    <text evidence="6">Belongs to the fungal hydrophobin family.</text>
</comment>
<keyword id="KW-0134">Cell wall</keyword>
<keyword id="KW-0968">Cytoplasmic vesicle</keyword>
<keyword id="KW-1015">Disulfide bond</keyword>
<keyword id="KW-0325">Glycoprotein</keyword>
<keyword id="KW-1185">Reference proteome</keyword>
<keyword id="KW-0964">Secreted</keyword>
<keyword id="KW-0732">Signal</keyword>
<keyword id="KW-0926">Vacuole</keyword>
<organism>
    <name type="scientific">Beauveria bassiana (strain ARSEF 2860)</name>
    <name type="common">White muscardine disease fungus</name>
    <name type="synonym">Tritirachium shiotae</name>
    <dbReference type="NCBI Taxonomy" id="655819"/>
    <lineage>
        <taxon>Eukaryota</taxon>
        <taxon>Fungi</taxon>
        <taxon>Dikarya</taxon>
        <taxon>Ascomycota</taxon>
        <taxon>Pezizomycotina</taxon>
        <taxon>Sordariomycetes</taxon>
        <taxon>Hypocreomycetidae</taxon>
        <taxon>Hypocreales</taxon>
        <taxon>Cordycipitaceae</taxon>
        <taxon>Beauveria</taxon>
    </lineage>
</organism>
<evidence type="ECO:0000250" key="1">
    <source>
        <dbReference type="UniProtKB" id="Q04571"/>
    </source>
</evidence>
<evidence type="ECO:0000255" key="2"/>
<evidence type="ECO:0000255" key="3">
    <source>
        <dbReference type="PROSITE-ProRule" id="PRU00498"/>
    </source>
</evidence>
<evidence type="ECO:0000269" key="4">
    <source>
    </source>
</evidence>
<evidence type="ECO:0000303" key="5">
    <source>
    </source>
</evidence>
<evidence type="ECO:0000305" key="6"/>
<evidence type="ECO:0000305" key="7">
    <source>
    </source>
</evidence>
<sequence>MKFSIAAIALAAVAVASPVEMEPRTNPSTCNINGNNNGKVVCCNSLIPILGQILCNIAVLGSTCNAGQTVRCCETDANGGLINISLLNCVG</sequence>
<name>HYD1E_BEAB2</name>
<feature type="signal peptide" evidence="2">
    <location>
        <begin position="1"/>
        <end position="16"/>
    </location>
</feature>
<feature type="chain" id="PRO_5003780582" description="Class I hydrophobin E">
    <location>
        <begin position="17"/>
        <end position="91"/>
    </location>
</feature>
<feature type="glycosylation site" description="N-linked (GlcNAc...) asparagine" evidence="3">
    <location>
        <position position="83"/>
    </location>
</feature>
<feature type="disulfide bond" evidence="1">
    <location>
        <begin position="30"/>
        <end position="72"/>
    </location>
</feature>
<feature type="disulfide bond" evidence="1">
    <location>
        <begin position="42"/>
        <end position="64"/>
    </location>
</feature>
<feature type="disulfide bond" evidence="1">
    <location>
        <begin position="43"/>
        <end position="55"/>
    </location>
</feature>
<feature type="disulfide bond" evidence="1">
    <location>
        <begin position="73"/>
        <end position="89"/>
    </location>
</feature>